<proteinExistence type="evidence at transcript level"/>
<name>ITPK1_CHICK</name>
<reference key="1">
    <citation type="journal article" date="2005" name="Genome Biol.">
        <title>Full-length cDNAs from chicken bursal lymphocytes to facilitate gene function analysis.</title>
        <authorList>
            <person name="Caldwell R.B."/>
            <person name="Kierzek A.M."/>
            <person name="Arakawa H."/>
            <person name="Bezzubov Y."/>
            <person name="Zaim J."/>
            <person name="Fiedler P."/>
            <person name="Kutter S."/>
            <person name="Blagodatski A."/>
            <person name="Kostovska D."/>
            <person name="Koter M."/>
            <person name="Plachy J."/>
            <person name="Carninci P."/>
            <person name="Hayashizaki Y."/>
            <person name="Buerstedde J.-M."/>
        </authorList>
    </citation>
    <scope>NUCLEOTIDE SEQUENCE [LARGE SCALE MRNA]</scope>
    <source>
        <strain>CB</strain>
        <tissue>Bursa of Fabricius</tissue>
    </source>
</reference>
<comment type="function">
    <text evidence="2">Kinase that can phosphorylate various inositol polyphosphate such as Ins(3,4,5,6)P4 or Ins(1,3,4)P3. Phosphorylates Ins(3,4,5,6)P4 at position 1 to form Ins(1,3,4,5,6)P5. This reaction is thought to have regulatory importance, since Ins(3,4,5,6)P4 is an inhibitor of plasma membrane Ca(2+)-activated Cl(-) channels, while Ins(1,3,4,5,6)P5 is not. Also phosphorylates Ins(1,3,4)P3 on O-5 and O-6 to form Ins(1,3,4,6)P4, an essential molecule in the hexakisphosphate (InsP6) pathway. Also acts as an inositol polyphosphate phosphatase that dephosphorylates Ins(1,3,4,5)P4 and Ins(1,3,4,6)P4 to Ins(1,3,4)P3, and Ins(1,3,4,5,6)P5 to Ins(3,4,5,6)P4. May also act as an isomerase that interconverts the inositol tetrakisphosphate isomers Ins(1,3,4,5)P4 and Ins(1,3,4,6)P4 in the presence of ADP and magnesium. Probably acts as the rate-limiting enzyme of the InsP6 pathway. Modifies TNF-alpha-induced apoptosis by interfering with the activation of TNFRSF1A-associated death domain. Plays an important role in MLKL-mediated necroptosis. Produces highly phosphorylated inositol phosphates such as inositolhexakisphosphate (InsP6) which bind to MLKL mediating the release of an N-terminal auto-inhibitory region leading to its activation. Essential for activated phospho-MLKL to oligomerize and localize to the cell membrane during necroptosis.</text>
</comment>
<comment type="catalytic activity">
    <reaction evidence="2">
        <text>1D-myo-inositol 3,4,5,6-tetrakisphosphate + ATP = 1D-myo-inositol 1,3,4,5,6-pentakisphosphate + ADP + H(+)</text>
        <dbReference type="Rhea" id="RHEA:12452"/>
        <dbReference type="ChEBI" id="CHEBI:15378"/>
        <dbReference type="ChEBI" id="CHEBI:30616"/>
        <dbReference type="ChEBI" id="CHEBI:57539"/>
        <dbReference type="ChEBI" id="CHEBI:57733"/>
        <dbReference type="ChEBI" id="CHEBI:456216"/>
        <dbReference type="EC" id="2.7.1.134"/>
    </reaction>
    <physiologicalReaction direction="left-to-right" evidence="2">
        <dbReference type="Rhea" id="RHEA:12453"/>
    </physiologicalReaction>
    <physiologicalReaction direction="right-to-left" evidence="2">
        <dbReference type="Rhea" id="RHEA:12454"/>
    </physiologicalReaction>
</comment>
<comment type="catalytic activity">
    <reaction evidence="2">
        <text>1D-myo-inositol 1,3,4-trisphosphate + ATP = 1D-myo-inositol 1,3,4,5-tetrakisphosphate + ADP + H(+)</text>
        <dbReference type="Rhea" id="RHEA:13253"/>
        <dbReference type="ChEBI" id="CHEBI:15378"/>
        <dbReference type="ChEBI" id="CHEBI:30616"/>
        <dbReference type="ChEBI" id="CHEBI:57895"/>
        <dbReference type="ChEBI" id="CHEBI:58414"/>
        <dbReference type="ChEBI" id="CHEBI:456216"/>
        <dbReference type="EC" id="2.7.1.159"/>
    </reaction>
    <physiologicalReaction direction="left-to-right" evidence="2">
        <dbReference type="Rhea" id="RHEA:13254"/>
    </physiologicalReaction>
    <physiologicalReaction direction="right-to-left" evidence="2">
        <dbReference type="Rhea" id="RHEA:13255"/>
    </physiologicalReaction>
</comment>
<comment type="catalytic activity">
    <reaction evidence="2">
        <text>1D-myo-inositol 1,3,4-trisphosphate + ATP = 1D-myo-inositol 1,3,4,6-tetrakisphosphate + ADP + H(+)</text>
        <dbReference type="Rhea" id="RHEA:20940"/>
        <dbReference type="ChEBI" id="CHEBI:15378"/>
        <dbReference type="ChEBI" id="CHEBI:30616"/>
        <dbReference type="ChEBI" id="CHEBI:57660"/>
        <dbReference type="ChEBI" id="CHEBI:58414"/>
        <dbReference type="ChEBI" id="CHEBI:456216"/>
        <dbReference type="EC" id="2.7.1.159"/>
    </reaction>
    <physiologicalReaction direction="left-to-right" evidence="2">
        <dbReference type="Rhea" id="RHEA:20941"/>
    </physiologicalReaction>
    <physiologicalReaction direction="right-to-left" evidence="2">
        <dbReference type="Rhea" id="RHEA:20942"/>
    </physiologicalReaction>
</comment>
<comment type="catalytic activity">
    <reaction evidence="2">
        <text>1D-myo-inositol 3,4,6-trisphosphate + ATP = 1D-myo-inositol 1,3,4,6-tetrakisphosphate + ADP + H(+)</text>
        <dbReference type="Rhea" id="RHEA:70287"/>
        <dbReference type="ChEBI" id="CHEBI:15378"/>
        <dbReference type="ChEBI" id="CHEBI:30616"/>
        <dbReference type="ChEBI" id="CHEBI:57660"/>
        <dbReference type="ChEBI" id="CHEBI:189099"/>
        <dbReference type="ChEBI" id="CHEBI:456216"/>
    </reaction>
    <physiologicalReaction direction="left-to-right" evidence="2">
        <dbReference type="Rhea" id="RHEA:70288"/>
    </physiologicalReaction>
    <physiologicalReaction direction="right-to-left" evidence="2">
        <dbReference type="Rhea" id="RHEA:70289"/>
    </physiologicalReaction>
</comment>
<comment type="catalytic activity">
    <reaction evidence="2">
        <text>1D-myo-inositol 1,3,4-trisphosphate + 1D-myo-inositol 1,3,4,5,6-pentakisphosphate = 1D-myo-inositol 3,4,5,6-tetrakisphosphate + 1D-myo-inositol 1,3,4,6-tetrakisphosphate</text>
        <dbReference type="Rhea" id="RHEA:70263"/>
        <dbReference type="ChEBI" id="CHEBI:57539"/>
        <dbReference type="ChEBI" id="CHEBI:57660"/>
        <dbReference type="ChEBI" id="CHEBI:57733"/>
        <dbReference type="ChEBI" id="CHEBI:58414"/>
    </reaction>
    <physiologicalReaction direction="left-to-right" evidence="2">
        <dbReference type="Rhea" id="RHEA:70264"/>
    </physiologicalReaction>
    <physiologicalReaction direction="right-to-left" evidence="2">
        <dbReference type="Rhea" id="RHEA:70265"/>
    </physiologicalReaction>
</comment>
<comment type="catalytic activity">
    <reaction evidence="2">
        <text>1D-myo-inositol 1,3,4-trisphosphate + 1D-myo-inositol 1,3,4,5,6-pentakisphosphate = 1D-myo-inositol 3,4,5,6-tetrakisphosphate + 1D-myo-inositol 1,3,4,5-tetrakisphosphate</text>
        <dbReference type="Rhea" id="RHEA:70271"/>
        <dbReference type="ChEBI" id="CHEBI:57539"/>
        <dbReference type="ChEBI" id="CHEBI:57733"/>
        <dbReference type="ChEBI" id="CHEBI:57895"/>
        <dbReference type="ChEBI" id="CHEBI:58414"/>
    </reaction>
    <physiologicalReaction direction="left-to-right" evidence="2">
        <dbReference type="Rhea" id="RHEA:70272"/>
    </physiologicalReaction>
    <physiologicalReaction direction="right-to-left" evidence="2">
        <dbReference type="Rhea" id="RHEA:70273"/>
    </physiologicalReaction>
</comment>
<comment type="cofactor">
    <cofactor evidence="2">
        <name>Mg(2+)</name>
        <dbReference type="ChEBI" id="CHEBI:18420"/>
    </cofactor>
    <text evidence="2">Binds 2 magnesium ions per subunit.</text>
</comment>
<comment type="subunit">
    <text evidence="1">Monomer.</text>
</comment>
<comment type="similarity">
    <text evidence="4">Belongs to the ITPK1 family.</text>
</comment>
<dbReference type="EC" id="2.7.1.134" evidence="2"/>
<dbReference type="EC" id="2.7.1.159" evidence="2"/>
<dbReference type="EMBL" id="AJ851420">
    <property type="protein sequence ID" value="CAH65054.1"/>
    <property type="molecule type" value="mRNA"/>
</dbReference>
<dbReference type="RefSeq" id="NP_001012606.1">
    <property type="nucleotide sequence ID" value="NM_001012588.2"/>
</dbReference>
<dbReference type="RefSeq" id="XP_040556976.1">
    <property type="nucleotide sequence ID" value="XM_040701042.2"/>
</dbReference>
<dbReference type="RefSeq" id="XP_046774580.1">
    <property type="nucleotide sequence ID" value="XM_046918624.1"/>
</dbReference>
<dbReference type="SMR" id="Q5F480"/>
<dbReference type="FunCoup" id="Q5F480">
    <property type="interactions" value="214"/>
</dbReference>
<dbReference type="STRING" id="9031.ENSGALP00000071243"/>
<dbReference type="PaxDb" id="9031-ENSGALP00000036796"/>
<dbReference type="Ensembl" id="ENSGALT00010036371.1">
    <property type="protein sequence ID" value="ENSGALP00010021158.1"/>
    <property type="gene ID" value="ENSGALG00010015103.1"/>
</dbReference>
<dbReference type="GeneID" id="423421"/>
<dbReference type="KEGG" id="gga:423421"/>
<dbReference type="CTD" id="3705"/>
<dbReference type="VEuPathDB" id="HostDB:geneid_423421"/>
<dbReference type="eggNOG" id="ENOG502QQS1">
    <property type="taxonomic scope" value="Eukaryota"/>
</dbReference>
<dbReference type="GeneTree" id="ENSGT00390000001278"/>
<dbReference type="HOGENOM" id="CLU_041857_1_1_1"/>
<dbReference type="InParanoid" id="Q5F480"/>
<dbReference type="OrthoDB" id="25308at2759"/>
<dbReference type="PhylomeDB" id="Q5F480"/>
<dbReference type="TreeFam" id="TF329288"/>
<dbReference type="Reactome" id="R-GGA-1855167">
    <property type="pathway name" value="Synthesis of pyrophosphates in the cytosol"/>
</dbReference>
<dbReference type="Reactome" id="R-GGA-1855204">
    <property type="pathway name" value="Synthesis of IP3 and IP4 in the cytosol"/>
</dbReference>
<dbReference type="Reactome" id="R-GGA-983231">
    <property type="pathway name" value="Factors involved in megakaryocyte development and platelet production"/>
</dbReference>
<dbReference type="PRO" id="PR:Q5F480"/>
<dbReference type="Proteomes" id="UP000000539">
    <property type="component" value="Chromosome 5"/>
</dbReference>
<dbReference type="Bgee" id="ENSGALG00000034898">
    <property type="expression patterns" value="Expressed in colon and 13 other cell types or tissues"/>
</dbReference>
<dbReference type="GO" id="GO:0005524">
    <property type="term" value="F:ATP binding"/>
    <property type="evidence" value="ECO:0007669"/>
    <property type="project" value="UniProtKB-KW"/>
</dbReference>
<dbReference type="GO" id="GO:0000825">
    <property type="term" value="F:inositol-1,3,4,5-tetrakisphosphate 6-kinase activity"/>
    <property type="evidence" value="ECO:0000250"/>
    <property type="project" value="UniProtKB"/>
</dbReference>
<dbReference type="GO" id="GO:0052726">
    <property type="term" value="F:inositol-1,3,4-trisphosphate 5-kinase activity"/>
    <property type="evidence" value="ECO:0000318"/>
    <property type="project" value="GO_Central"/>
</dbReference>
<dbReference type="GO" id="GO:0052725">
    <property type="term" value="F:inositol-1,3,4-trisphosphate 6-kinase activity"/>
    <property type="evidence" value="ECO:0000318"/>
    <property type="project" value="GO_Central"/>
</dbReference>
<dbReference type="GO" id="GO:0047325">
    <property type="term" value="F:inositol-3,4,5,6-tetrakisphosphate 1-kinase activity"/>
    <property type="evidence" value="ECO:0000318"/>
    <property type="project" value="GO_Central"/>
</dbReference>
<dbReference type="GO" id="GO:0052835">
    <property type="term" value="F:inositol-3,4,6-trisphosphate 1-kinase activity"/>
    <property type="evidence" value="ECO:0007669"/>
    <property type="project" value="RHEA"/>
</dbReference>
<dbReference type="GO" id="GO:0016853">
    <property type="term" value="F:isomerase activity"/>
    <property type="evidence" value="ECO:0007669"/>
    <property type="project" value="UniProtKB-KW"/>
</dbReference>
<dbReference type="GO" id="GO:0000287">
    <property type="term" value="F:magnesium ion binding"/>
    <property type="evidence" value="ECO:0007669"/>
    <property type="project" value="InterPro"/>
</dbReference>
<dbReference type="GO" id="GO:0032957">
    <property type="term" value="P:inositol trisphosphate metabolic process"/>
    <property type="evidence" value="ECO:0007669"/>
    <property type="project" value="InterPro"/>
</dbReference>
<dbReference type="GO" id="GO:0070266">
    <property type="term" value="P:necroptotic process"/>
    <property type="evidence" value="ECO:0000250"/>
    <property type="project" value="UniProtKB"/>
</dbReference>
<dbReference type="FunFam" id="3.30.1490.220:FF:000001">
    <property type="entry name" value="Inositol-tetrakisphosphate 1-kinase"/>
    <property type="match status" value="1"/>
</dbReference>
<dbReference type="FunFam" id="3.40.50.11370:FF:000001">
    <property type="entry name" value="Inositol-tetrakisphosphate 1-kinase"/>
    <property type="match status" value="1"/>
</dbReference>
<dbReference type="FunFam" id="3.30.470.20:FF:000047">
    <property type="entry name" value="Inositol-tetrakisphosphate 1-kinase 4"/>
    <property type="match status" value="1"/>
</dbReference>
<dbReference type="Gene3D" id="3.30.1490.220">
    <property type="match status" value="1"/>
</dbReference>
<dbReference type="Gene3D" id="3.40.50.11370">
    <property type="match status" value="1"/>
</dbReference>
<dbReference type="Gene3D" id="3.30.470.20">
    <property type="entry name" value="ATP-grasp fold, B domain"/>
    <property type="match status" value="1"/>
</dbReference>
<dbReference type="InterPro" id="IPR011761">
    <property type="entry name" value="ATP-grasp"/>
</dbReference>
<dbReference type="InterPro" id="IPR008656">
    <property type="entry name" value="Inositol_tetrakis-P_1-kinase"/>
</dbReference>
<dbReference type="InterPro" id="IPR040464">
    <property type="entry name" value="InsP(3)kin_ATP-grasp"/>
</dbReference>
<dbReference type="InterPro" id="IPR041429">
    <property type="entry name" value="ITPK1_N"/>
</dbReference>
<dbReference type="PANTHER" id="PTHR14217">
    <property type="entry name" value="INOSITOL-TETRAKISPHOSPHATE 1-KINASE"/>
    <property type="match status" value="1"/>
</dbReference>
<dbReference type="PANTHER" id="PTHR14217:SF1">
    <property type="entry name" value="INOSITOL-TETRAKISPHOSPHATE 1-KINASE"/>
    <property type="match status" value="1"/>
</dbReference>
<dbReference type="Pfam" id="PF05770">
    <property type="entry name" value="Ins134_P3_kin"/>
    <property type="match status" value="1"/>
</dbReference>
<dbReference type="Pfam" id="PF17927">
    <property type="entry name" value="Ins134_P3_kin_N"/>
    <property type="match status" value="1"/>
</dbReference>
<dbReference type="SUPFAM" id="SSF56059">
    <property type="entry name" value="Glutathione synthetase ATP-binding domain-like"/>
    <property type="match status" value="1"/>
</dbReference>
<dbReference type="PROSITE" id="PS50975">
    <property type="entry name" value="ATP_GRASP"/>
    <property type="match status" value="1"/>
</dbReference>
<evidence type="ECO:0000250" key="1"/>
<evidence type="ECO:0000250" key="2">
    <source>
        <dbReference type="UniProtKB" id="Q13572"/>
    </source>
</evidence>
<evidence type="ECO:0000255" key="3">
    <source>
        <dbReference type="PROSITE-ProRule" id="PRU00409"/>
    </source>
</evidence>
<evidence type="ECO:0000305" key="4"/>
<organism>
    <name type="scientific">Gallus gallus</name>
    <name type="common">Chicken</name>
    <dbReference type="NCBI Taxonomy" id="9031"/>
    <lineage>
        <taxon>Eukaryota</taxon>
        <taxon>Metazoa</taxon>
        <taxon>Chordata</taxon>
        <taxon>Craniata</taxon>
        <taxon>Vertebrata</taxon>
        <taxon>Euteleostomi</taxon>
        <taxon>Archelosauria</taxon>
        <taxon>Archosauria</taxon>
        <taxon>Dinosauria</taxon>
        <taxon>Saurischia</taxon>
        <taxon>Theropoda</taxon>
        <taxon>Coelurosauria</taxon>
        <taxon>Aves</taxon>
        <taxon>Neognathae</taxon>
        <taxon>Galloanserae</taxon>
        <taxon>Galliformes</taxon>
        <taxon>Phasianidae</taxon>
        <taxon>Phasianinae</taxon>
        <taxon>Gallus</taxon>
    </lineage>
</organism>
<keyword id="KW-0067">ATP-binding</keyword>
<keyword id="KW-0413">Isomerase</keyword>
<keyword id="KW-0418">Kinase</keyword>
<keyword id="KW-0460">Magnesium</keyword>
<keyword id="KW-0479">Metal-binding</keyword>
<keyword id="KW-0547">Nucleotide-binding</keyword>
<keyword id="KW-1185">Reference proteome</keyword>
<keyword id="KW-0808">Transferase</keyword>
<accession>Q5F480</accession>
<sequence length="407" mass="45316">MQTFLKGKRVGYWLSEKKIRKLNFQAFAELCRKRGVEVVQLDLTKPIEDQGPLDVIIHKLTDVILEADQNDSQSLELVQRFQEYIDAHPETIILDPLPAIRTLLDRSKSYELIRQIEAYMQDERICSPPFMELTSACGEDTLQLIEKNGLAFPFICKTRVAHGTNSHEMAIIFNQEGLKAVRPPCVIQSFINHNAVLYKVFVVGESYTVVKRPSLKNFSAGISDRESIFFNSHNVSKPESSSVLTALDKIEGVFERPDDDVIREISKALRQALGVSLFGIDIIINNQTGQHAVIDINAFPGYEGVSEFFTDLLNHIAAVLQGQAPEVTQLNRSKLLAEQTGGIMDERICCASTGCISVMGKDSSWIVESETNSSVKLQHQRLGCNSAVSPSFQQHCVATLATKASSQ</sequence>
<protein>
    <recommendedName>
        <fullName>Inositol-tetrakisphosphate 1-kinase</fullName>
        <ecNumber evidence="2">2.7.1.134</ecNumber>
    </recommendedName>
    <alternativeName>
        <fullName>Inositol 1,3,4-trisphosphate 5/6-kinase</fullName>
        <shortName>Inositol-triphosphate 5/6-kinase</shortName>
        <shortName>Ins(1,3,4)P(3) 5/6-kinase</shortName>
        <ecNumber evidence="2">2.7.1.159</ecNumber>
    </alternativeName>
</protein>
<gene>
    <name type="primary">ITPK1</name>
    <name type="ORF">RCJMB04_2g4</name>
</gene>
<feature type="chain" id="PRO_0000220835" description="Inositol-tetrakisphosphate 1-kinase">
    <location>
        <begin position="1"/>
        <end position="407"/>
    </location>
</feature>
<feature type="domain" description="ATP-grasp" evidence="3">
    <location>
        <begin position="117"/>
        <end position="341"/>
    </location>
</feature>
<feature type="binding site" evidence="1">
    <location>
        <position position="18"/>
    </location>
    <ligand>
        <name>1D-myo-inositol 1,3,4-trisphosphate</name>
        <dbReference type="ChEBI" id="CHEBI:58414"/>
    </ligand>
</feature>
<feature type="binding site" evidence="1">
    <location>
        <position position="106"/>
    </location>
    <ligand>
        <name>ATP</name>
        <dbReference type="ChEBI" id="CHEBI:30616"/>
    </ligand>
</feature>
<feature type="binding site" evidence="1">
    <location>
        <position position="157"/>
    </location>
    <ligand>
        <name>ATP</name>
        <dbReference type="ChEBI" id="CHEBI:30616"/>
    </ligand>
</feature>
<feature type="binding site" evidence="1">
    <location>
        <position position="167"/>
    </location>
    <ligand>
        <name>1D-myo-inositol 1,3,4-trisphosphate</name>
        <dbReference type="ChEBI" id="CHEBI:58414"/>
    </ligand>
</feature>
<feature type="binding site" evidence="3">
    <location>
        <begin position="188"/>
        <end position="199"/>
    </location>
    <ligand>
        <name>ATP</name>
        <dbReference type="ChEBI" id="CHEBI:30616"/>
    </ligand>
</feature>
<feature type="binding site" evidence="1">
    <location>
        <position position="199"/>
    </location>
    <ligand>
        <name>1D-myo-inositol 1,3,4-trisphosphate</name>
        <dbReference type="ChEBI" id="CHEBI:58414"/>
    </ligand>
</feature>
<feature type="binding site" evidence="1">
    <location>
        <position position="214"/>
    </location>
    <ligand>
        <name>ATP</name>
        <dbReference type="ChEBI" id="CHEBI:30616"/>
    </ligand>
</feature>
<feature type="binding site" evidence="1">
    <location>
        <position position="232"/>
    </location>
    <ligand>
        <name>ATP</name>
        <dbReference type="ChEBI" id="CHEBI:30616"/>
    </ligand>
</feature>
<feature type="binding site" evidence="1">
    <location>
        <position position="236"/>
    </location>
    <ligand>
        <name>ATP</name>
        <dbReference type="ChEBI" id="CHEBI:30616"/>
    </ligand>
</feature>
<feature type="binding site" evidence="1">
    <location>
        <position position="281"/>
    </location>
    <ligand>
        <name>Mg(2+)</name>
        <dbReference type="ChEBI" id="CHEBI:18420"/>
        <label>1</label>
    </ligand>
</feature>
<feature type="binding site" evidence="1">
    <location>
        <position position="295"/>
    </location>
    <ligand>
        <name>Mg(2+)</name>
        <dbReference type="ChEBI" id="CHEBI:18420"/>
        <label>1</label>
    </ligand>
</feature>
<feature type="binding site" evidence="1">
    <location>
        <position position="295"/>
    </location>
    <ligand>
        <name>Mg(2+)</name>
        <dbReference type="ChEBI" id="CHEBI:18420"/>
        <label>2</label>
    </ligand>
</feature>
<feature type="binding site" evidence="1">
    <location>
        <position position="297"/>
    </location>
    <ligand>
        <name>1D-myo-inositol 1,3,4-trisphosphate</name>
        <dbReference type="ChEBI" id="CHEBI:58414"/>
    </ligand>
</feature>
<feature type="binding site" evidence="1">
    <location>
        <position position="297"/>
    </location>
    <ligand>
        <name>Mg(2+)</name>
        <dbReference type="ChEBI" id="CHEBI:18420"/>
        <label>2</label>
    </ligand>
</feature>